<organism>
    <name type="scientific">Escherichia coli (strain K12 / DH10B)</name>
    <dbReference type="NCBI Taxonomy" id="316385"/>
    <lineage>
        <taxon>Bacteria</taxon>
        <taxon>Pseudomonadati</taxon>
        <taxon>Pseudomonadota</taxon>
        <taxon>Gammaproteobacteria</taxon>
        <taxon>Enterobacterales</taxon>
        <taxon>Enterobacteriaceae</taxon>
        <taxon>Escherichia</taxon>
    </lineage>
</organism>
<protein>
    <recommendedName>
        <fullName evidence="1">Chitooligosaccharide deacetylase</fullName>
        <shortName evidence="1">COD</shortName>
        <ecNumber evidence="1">3.5.1.105</ecNumber>
    </recommendedName>
    <alternativeName>
        <fullName evidence="1">Chitin disaccharide deacetylase</fullName>
    </alternativeName>
    <alternativeName>
        <fullName evidence="1">Chitobiose deacetylase</fullName>
    </alternativeName>
    <alternativeName>
        <fullName evidence="1">Chitobiose-6P deacetylase</fullName>
    </alternativeName>
    <alternativeName>
        <fullName evidence="1">Chitotriose deacetylase</fullName>
    </alternativeName>
    <alternativeName>
        <fullName evidence="1">Chitotriose-6P deacetylase</fullName>
    </alternativeName>
</protein>
<evidence type="ECO:0000255" key="1">
    <source>
        <dbReference type="HAMAP-Rule" id="MF_01246"/>
    </source>
</evidence>
<comment type="function">
    <text evidence="1">Involved in the degradation of chitin. ChbG is essential for growth on the acetylated chitooligosaccharides chitobiose and chitotriose but is dispensable for growth on cellobiose and chitosan dimer, the deacetylated form of chitobiose. Deacetylation of chitobiose-6-P and chitotriose-6-P is necessary for both the activation of the chb promoter by the regulatory protein ChbR and the hydrolysis of phosphorylated beta-glucosides by the phospho-beta-glucosidase ChbF. Catalyzes the removal of only one acetyl group from chitobiose-6-P to yield monoacetylchitobiose-6-P, the inducer of ChbR and the substrate of ChbF.</text>
</comment>
<comment type="catalytic activity">
    <reaction evidence="1">
        <text>N,N'-diacetylchitobiose + H2O = N-acetyl-beta-D-glucosaminyl-(1-&gt;4)-D-glucosamine + acetate</text>
        <dbReference type="Rhea" id="RHEA:27469"/>
        <dbReference type="ChEBI" id="CHEBI:15377"/>
        <dbReference type="ChEBI" id="CHEBI:28681"/>
        <dbReference type="ChEBI" id="CHEBI:30089"/>
        <dbReference type="ChEBI" id="CHEBI:59910"/>
        <dbReference type="EC" id="3.5.1.105"/>
    </reaction>
</comment>
<comment type="catalytic activity">
    <reaction evidence="1">
        <text>diacetylchitobiose-6'-phosphate + H2O = N'-monoacetylchitobiose-6'-phosphate + acetate</text>
        <dbReference type="Rhea" id="RHEA:35083"/>
        <dbReference type="ChEBI" id="CHEBI:15377"/>
        <dbReference type="ChEBI" id="CHEBI:30089"/>
        <dbReference type="ChEBI" id="CHEBI:64883"/>
        <dbReference type="ChEBI" id="CHEBI:71315"/>
    </reaction>
</comment>
<comment type="cofactor">
    <cofactor evidence="1">
        <name>Mg(2+)</name>
        <dbReference type="ChEBI" id="CHEBI:18420"/>
    </cofactor>
</comment>
<comment type="pathway">
    <text evidence="1">Glycan degradation; chitin degradation.</text>
</comment>
<comment type="subunit">
    <text evidence="1">Homodimer.</text>
</comment>
<comment type="subcellular location">
    <subcellularLocation>
        <location evidence="1">Cytoplasm</location>
    </subcellularLocation>
</comment>
<comment type="similarity">
    <text evidence="1">Belongs to the YdjC deacetylase family. ChbG subfamily.</text>
</comment>
<name>CHBG_ECODH</name>
<feature type="chain" id="PRO_1000139823" description="Chitooligosaccharide deacetylase">
    <location>
        <begin position="1"/>
        <end position="249"/>
    </location>
</feature>
<feature type="binding site" evidence="1">
    <location>
        <position position="61"/>
    </location>
    <ligand>
        <name>Mg(2+)</name>
        <dbReference type="ChEBI" id="CHEBI:18420"/>
    </ligand>
</feature>
<feature type="binding site" evidence="1">
    <location>
        <position position="125"/>
    </location>
    <ligand>
        <name>Mg(2+)</name>
        <dbReference type="ChEBI" id="CHEBI:18420"/>
    </ligand>
</feature>
<proteinExistence type="inferred from homology"/>
<accession>B1XGJ4</accession>
<sequence length="249" mass="27774">MERLLIVNADDFGLSKGQNYGIIEACRNGIVTSTTALVNGQAIDHAVQLSRDEPSLAIGMHFVLTMGKPLTAMPGLTRDGVLGKWIWQLAEEDALPLEEITQELVSQYLRFIELFGRKPTHLDSHHHVHMFPQIFPIVARFAAEQGIALRADRQMAFDLPVNLRTTQGFSSAFYGEEISESLFLQVLDDAGHRGDRSLEVMCHPAFIDNTIRQSAYCFPRLTELDVLTSASLKGAIAQRGYRLGSYRDV</sequence>
<dbReference type="EC" id="3.5.1.105" evidence="1"/>
<dbReference type="EMBL" id="CP000948">
    <property type="protein sequence ID" value="ACB02932.1"/>
    <property type="molecule type" value="Genomic_DNA"/>
</dbReference>
<dbReference type="RefSeq" id="WP_000440471.1">
    <property type="nucleotide sequence ID" value="NC_010473.1"/>
</dbReference>
<dbReference type="SMR" id="B1XGJ4"/>
<dbReference type="KEGG" id="ecd:ECDH10B_1871"/>
<dbReference type="HOGENOM" id="CLU_064244_4_1_6"/>
<dbReference type="UniPathway" id="UPA00349"/>
<dbReference type="GO" id="GO:0005737">
    <property type="term" value="C:cytoplasm"/>
    <property type="evidence" value="ECO:0007669"/>
    <property type="project" value="UniProtKB-SubCell"/>
</dbReference>
<dbReference type="GO" id="GO:0036311">
    <property type="term" value="F:chitin disaccharide deacetylase activity"/>
    <property type="evidence" value="ECO:0007669"/>
    <property type="project" value="UniProtKB-UniRule"/>
</dbReference>
<dbReference type="GO" id="GO:0019213">
    <property type="term" value="F:deacetylase activity"/>
    <property type="evidence" value="ECO:0007669"/>
    <property type="project" value="TreeGrafter"/>
</dbReference>
<dbReference type="GO" id="GO:0046872">
    <property type="term" value="F:metal ion binding"/>
    <property type="evidence" value="ECO:0007669"/>
    <property type="project" value="UniProtKB-KW"/>
</dbReference>
<dbReference type="GO" id="GO:0006032">
    <property type="term" value="P:chitin catabolic process"/>
    <property type="evidence" value="ECO:0007669"/>
    <property type="project" value="UniProtKB-UniPathway"/>
</dbReference>
<dbReference type="GO" id="GO:0052777">
    <property type="term" value="P:diacetylchitobiose catabolic process"/>
    <property type="evidence" value="ECO:0007669"/>
    <property type="project" value="UniProtKB-UniRule"/>
</dbReference>
<dbReference type="GO" id="GO:0000272">
    <property type="term" value="P:polysaccharide catabolic process"/>
    <property type="evidence" value="ECO:0007669"/>
    <property type="project" value="UniProtKB-UniRule"/>
</dbReference>
<dbReference type="CDD" id="cd10803">
    <property type="entry name" value="YdjC_EF3048_like"/>
    <property type="match status" value="1"/>
</dbReference>
<dbReference type="FunFam" id="3.20.20.370:FF:000001">
    <property type="entry name" value="Chitooligosaccharide deacetylase"/>
    <property type="match status" value="1"/>
</dbReference>
<dbReference type="Gene3D" id="3.20.20.370">
    <property type="entry name" value="Glycoside hydrolase/deacetylase"/>
    <property type="match status" value="1"/>
</dbReference>
<dbReference type="HAMAP" id="MF_01246">
    <property type="entry name" value="COD"/>
    <property type="match status" value="1"/>
</dbReference>
<dbReference type="InterPro" id="IPR022948">
    <property type="entry name" value="COD_ChbG_bac"/>
</dbReference>
<dbReference type="InterPro" id="IPR011330">
    <property type="entry name" value="Glyco_hydro/deAcase_b/a-brl"/>
</dbReference>
<dbReference type="InterPro" id="IPR006879">
    <property type="entry name" value="YdjC-like"/>
</dbReference>
<dbReference type="NCBIfam" id="NF002559">
    <property type="entry name" value="PRK02134.1"/>
    <property type="match status" value="1"/>
</dbReference>
<dbReference type="PANTHER" id="PTHR31609:SF1">
    <property type="entry name" value="CARBOHYDRATE DEACETYLASE"/>
    <property type="match status" value="1"/>
</dbReference>
<dbReference type="PANTHER" id="PTHR31609">
    <property type="entry name" value="YDJC DEACETYLASE FAMILY MEMBER"/>
    <property type="match status" value="1"/>
</dbReference>
<dbReference type="Pfam" id="PF04794">
    <property type="entry name" value="YdjC"/>
    <property type="match status" value="1"/>
</dbReference>
<dbReference type="SUPFAM" id="SSF88713">
    <property type="entry name" value="Glycoside hydrolase/deacetylase"/>
    <property type="match status" value="1"/>
</dbReference>
<keyword id="KW-0119">Carbohydrate metabolism</keyword>
<keyword id="KW-0146">Chitin degradation</keyword>
<keyword id="KW-0963">Cytoplasm</keyword>
<keyword id="KW-0378">Hydrolase</keyword>
<keyword id="KW-0460">Magnesium</keyword>
<keyword id="KW-0479">Metal-binding</keyword>
<keyword id="KW-0624">Polysaccharide degradation</keyword>
<gene>
    <name evidence="1" type="primary">chbG</name>
    <name type="ordered locus">ECDH10B_1871</name>
</gene>
<reference key="1">
    <citation type="journal article" date="2008" name="J. Bacteriol.">
        <title>The complete genome sequence of Escherichia coli DH10B: insights into the biology of a laboratory workhorse.</title>
        <authorList>
            <person name="Durfee T."/>
            <person name="Nelson R."/>
            <person name="Baldwin S."/>
            <person name="Plunkett G. III"/>
            <person name="Burland V."/>
            <person name="Mau B."/>
            <person name="Petrosino J.F."/>
            <person name="Qin X."/>
            <person name="Muzny D.M."/>
            <person name="Ayele M."/>
            <person name="Gibbs R.A."/>
            <person name="Csorgo B."/>
            <person name="Posfai G."/>
            <person name="Weinstock G.M."/>
            <person name="Blattner F.R."/>
        </authorList>
    </citation>
    <scope>NUCLEOTIDE SEQUENCE [LARGE SCALE GENOMIC DNA]</scope>
    <source>
        <strain>K12 / DH10B</strain>
    </source>
</reference>